<accession>Q99KV1</accession>
<accession>A6X957</accession>
<accession>Q543I7</accession>
<accession>Q8BK79</accession>
<accession>Q8VCY1</accession>
<accession>Q8VHB1</accession>
<sequence length="358" mass="40555">MAPQNLSTFCLLLLYLIGTVIAGRDFYKILGVPRSASIKDIKKAYRKLALQLHPDRNPDDPQAQEKFQDLGAAYEVLSDSEKRKQYDTYGEEGLKDGHQSSHGDIFSHFFGDFGFMFGGTPRQQDRNIPRGSDIIVDLEVTLEEVYAGNFVEVVRNKPVARQAPGKRKCNCRQEMRTTQLGPGRFQMTQEVVCDECPNVKLVNEERTLEVEIEPGVRDGMEYPFIGEGEPHVDGEPGDLRFRIKVVKHRIFERRGDDLYTNVTVSLVEALVGFEMDITHLDGHKVHISRDKITRPGAKLWKKGEGLPNFDNNNIKGSLIITFDVDFPKEQLTEEAKEGIKQLLKQGPVQKVYNGLQGY</sequence>
<reference key="1">
    <citation type="journal article" date="2001" name="J. Biol. Chem.">
        <title>A DnaJ protein, apobec-1-binding protein-2, modulates apolipoprotein B mRNA editing.</title>
        <authorList>
            <person name="Lau P.P."/>
            <person name="Villanueva H."/>
            <person name="Kobayashi K."/>
            <person name="Nakamuta M."/>
            <person name="Chang B.H.-J."/>
            <person name="Chan L."/>
        </authorList>
    </citation>
    <scope>NUCLEOTIDE SEQUENCE [MRNA]</scope>
    <source>
        <strain>BALB/cJ</strain>
        <tissue>Liver</tissue>
    </source>
</reference>
<reference key="2">
    <citation type="journal article" date="2005" name="Science">
        <title>The transcriptional landscape of the mammalian genome.</title>
        <authorList>
            <person name="Carninci P."/>
            <person name="Kasukawa T."/>
            <person name="Katayama S."/>
            <person name="Gough J."/>
            <person name="Frith M.C."/>
            <person name="Maeda N."/>
            <person name="Oyama R."/>
            <person name="Ravasi T."/>
            <person name="Lenhard B."/>
            <person name="Wells C."/>
            <person name="Kodzius R."/>
            <person name="Shimokawa K."/>
            <person name="Bajic V.B."/>
            <person name="Brenner S.E."/>
            <person name="Batalov S."/>
            <person name="Forrest A.R."/>
            <person name="Zavolan M."/>
            <person name="Davis M.J."/>
            <person name="Wilming L.G."/>
            <person name="Aidinis V."/>
            <person name="Allen J.E."/>
            <person name="Ambesi-Impiombato A."/>
            <person name="Apweiler R."/>
            <person name="Aturaliya R.N."/>
            <person name="Bailey T.L."/>
            <person name="Bansal M."/>
            <person name="Baxter L."/>
            <person name="Beisel K.W."/>
            <person name="Bersano T."/>
            <person name="Bono H."/>
            <person name="Chalk A.M."/>
            <person name="Chiu K.P."/>
            <person name="Choudhary V."/>
            <person name="Christoffels A."/>
            <person name="Clutterbuck D.R."/>
            <person name="Crowe M.L."/>
            <person name="Dalla E."/>
            <person name="Dalrymple B.P."/>
            <person name="de Bono B."/>
            <person name="Della Gatta G."/>
            <person name="di Bernardo D."/>
            <person name="Down T."/>
            <person name="Engstrom P."/>
            <person name="Fagiolini M."/>
            <person name="Faulkner G."/>
            <person name="Fletcher C.F."/>
            <person name="Fukushima T."/>
            <person name="Furuno M."/>
            <person name="Futaki S."/>
            <person name="Gariboldi M."/>
            <person name="Georgii-Hemming P."/>
            <person name="Gingeras T.R."/>
            <person name="Gojobori T."/>
            <person name="Green R.E."/>
            <person name="Gustincich S."/>
            <person name="Harbers M."/>
            <person name="Hayashi Y."/>
            <person name="Hensch T.K."/>
            <person name="Hirokawa N."/>
            <person name="Hill D."/>
            <person name="Huminiecki L."/>
            <person name="Iacono M."/>
            <person name="Ikeo K."/>
            <person name="Iwama A."/>
            <person name="Ishikawa T."/>
            <person name="Jakt M."/>
            <person name="Kanapin A."/>
            <person name="Katoh M."/>
            <person name="Kawasawa Y."/>
            <person name="Kelso J."/>
            <person name="Kitamura H."/>
            <person name="Kitano H."/>
            <person name="Kollias G."/>
            <person name="Krishnan S.P."/>
            <person name="Kruger A."/>
            <person name="Kummerfeld S.K."/>
            <person name="Kurochkin I.V."/>
            <person name="Lareau L.F."/>
            <person name="Lazarevic D."/>
            <person name="Lipovich L."/>
            <person name="Liu J."/>
            <person name="Liuni S."/>
            <person name="McWilliam S."/>
            <person name="Madan Babu M."/>
            <person name="Madera M."/>
            <person name="Marchionni L."/>
            <person name="Matsuda H."/>
            <person name="Matsuzawa S."/>
            <person name="Miki H."/>
            <person name="Mignone F."/>
            <person name="Miyake S."/>
            <person name="Morris K."/>
            <person name="Mottagui-Tabar S."/>
            <person name="Mulder N."/>
            <person name="Nakano N."/>
            <person name="Nakauchi H."/>
            <person name="Ng P."/>
            <person name="Nilsson R."/>
            <person name="Nishiguchi S."/>
            <person name="Nishikawa S."/>
            <person name="Nori F."/>
            <person name="Ohara O."/>
            <person name="Okazaki Y."/>
            <person name="Orlando V."/>
            <person name="Pang K.C."/>
            <person name="Pavan W.J."/>
            <person name="Pavesi G."/>
            <person name="Pesole G."/>
            <person name="Petrovsky N."/>
            <person name="Piazza S."/>
            <person name="Reed J."/>
            <person name="Reid J.F."/>
            <person name="Ring B.Z."/>
            <person name="Ringwald M."/>
            <person name="Rost B."/>
            <person name="Ruan Y."/>
            <person name="Salzberg S.L."/>
            <person name="Sandelin A."/>
            <person name="Schneider C."/>
            <person name="Schoenbach C."/>
            <person name="Sekiguchi K."/>
            <person name="Semple C.A."/>
            <person name="Seno S."/>
            <person name="Sessa L."/>
            <person name="Sheng Y."/>
            <person name="Shibata Y."/>
            <person name="Shimada H."/>
            <person name="Shimada K."/>
            <person name="Silva D."/>
            <person name="Sinclair B."/>
            <person name="Sperling S."/>
            <person name="Stupka E."/>
            <person name="Sugiura K."/>
            <person name="Sultana R."/>
            <person name="Takenaka Y."/>
            <person name="Taki K."/>
            <person name="Tammoja K."/>
            <person name="Tan S.L."/>
            <person name="Tang S."/>
            <person name="Taylor M.S."/>
            <person name="Tegner J."/>
            <person name="Teichmann S.A."/>
            <person name="Ueda H.R."/>
            <person name="van Nimwegen E."/>
            <person name="Verardo R."/>
            <person name="Wei C.L."/>
            <person name="Yagi K."/>
            <person name="Yamanishi H."/>
            <person name="Zabarovsky E."/>
            <person name="Zhu S."/>
            <person name="Zimmer A."/>
            <person name="Hide W."/>
            <person name="Bult C."/>
            <person name="Grimmond S.M."/>
            <person name="Teasdale R.D."/>
            <person name="Liu E.T."/>
            <person name="Brusic V."/>
            <person name="Quackenbush J."/>
            <person name="Wahlestedt C."/>
            <person name="Mattick J.S."/>
            <person name="Hume D.A."/>
            <person name="Kai C."/>
            <person name="Sasaki D."/>
            <person name="Tomaru Y."/>
            <person name="Fukuda S."/>
            <person name="Kanamori-Katayama M."/>
            <person name="Suzuki M."/>
            <person name="Aoki J."/>
            <person name="Arakawa T."/>
            <person name="Iida J."/>
            <person name="Imamura K."/>
            <person name="Itoh M."/>
            <person name="Kato T."/>
            <person name="Kawaji H."/>
            <person name="Kawagashira N."/>
            <person name="Kawashima T."/>
            <person name="Kojima M."/>
            <person name="Kondo S."/>
            <person name="Konno H."/>
            <person name="Nakano K."/>
            <person name="Ninomiya N."/>
            <person name="Nishio T."/>
            <person name="Okada M."/>
            <person name="Plessy C."/>
            <person name="Shibata K."/>
            <person name="Shiraki T."/>
            <person name="Suzuki S."/>
            <person name="Tagami M."/>
            <person name="Waki K."/>
            <person name="Watahiki A."/>
            <person name="Okamura-Oho Y."/>
            <person name="Suzuki H."/>
            <person name="Kawai J."/>
            <person name="Hayashizaki Y."/>
        </authorList>
    </citation>
    <scope>NUCLEOTIDE SEQUENCE [LARGE SCALE MRNA]</scope>
    <source>
        <strain>C57BL/6J</strain>
        <tissue>Pancreas</tissue>
    </source>
</reference>
<reference key="3">
    <citation type="journal article" date="2009" name="PLoS Biol.">
        <title>Lineage-specific biology revealed by a finished genome assembly of the mouse.</title>
        <authorList>
            <person name="Church D.M."/>
            <person name="Goodstadt L."/>
            <person name="Hillier L.W."/>
            <person name="Zody M.C."/>
            <person name="Goldstein S."/>
            <person name="She X."/>
            <person name="Bult C.J."/>
            <person name="Agarwala R."/>
            <person name="Cherry J.L."/>
            <person name="DiCuccio M."/>
            <person name="Hlavina W."/>
            <person name="Kapustin Y."/>
            <person name="Meric P."/>
            <person name="Maglott D."/>
            <person name="Birtle Z."/>
            <person name="Marques A.C."/>
            <person name="Graves T."/>
            <person name="Zhou S."/>
            <person name="Teague B."/>
            <person name="Potamousis K."/>
            <person name="Churas C."/>
            <person name="Place M."/>
            <person name="Herschleb J."/>
            <person name="Runnheim R."/>
            <person name="Forrest D."/>
            <person name="Amos-Landgraf J."/>
            <person name="Schwartz D.C."/>
            <person name="Cheng Z."/>
            <person name="Lindblad-Toh K."/>
            <person name="Eichler E.E."/>
            <person name="Ponting C.P."/>
        </authorList>
    </citation>
    <scope>NUCLEOTIDE SEQUENCE [LARGE SCALE GENOMIC DNA]</scope>
    <source>
        <strain>C57BL/6J</strain>
    </source>
</reference>
<reference key="4">
    <citation type="journal article" date="2004" name="Genome Res.">
        <title>The status, quality, and expansion of the NIH full-length cDNA project: the Mammalian Gene Collection (MGC).</title>
        <authorList>
            <consortium name="The MGC Project Team"/>
        </authorList>
    </citation>
    <scope>NUCLEOTIDE SEQUENCE [LARGE SCALE MRNA]</scope>
    <source>
        <strain>Czech II</strain>
        <strain>FVB/N</strain>
        <tissue>Colon</tissue>
        <tissue>Mammary tumor</tissue>
    </source>
</reference>
<reference key="5">
    <citation type="journal article" date="2002" name="Mol. Biol. Cell">
        <title>A subset of chaperones and folding enzymes form multiprotein complexes in endoplasmic reticulum to bind nascent proteins.</title>
        <authorList>
            <person name="Meunier L."/>
            <person name="Usherwood Y.-K."/>
            <person name="Chung K.T."/>
            <person name="Hendershot L.M."/>
        </authorList>
    </citation>
    <scope>COMPONENT OF A CHAPERONE COMPLEX</scope>
</reference>
<reference key="6">
    <citation type="journal article" date="2005" name="Mol. Biol. Cell">
        <title>ERdj3, a stress-inducible endoplasmic reticulum DnaJ homologue, serves as a cofactor for BiP's interactions with unfolded substrates.</title>
        <authorList>
            <person name="Shen Y."/>
            <person name="Hendershot L.M."/>
        </authorList>
    </citation>
    <scope>SUBCELLULAR LOCATION</scope>
    <scope>INTERACTION WITH DENATURED SUBSTRATES</scope>
</reference>
<reference key="7">
    <citation type="journal article" date="2010" name="Cell">
        <title>A tissue-specific atlas of mouse protein phosphorylation and expression.</title>
        <authorList>
            <person name="Huttlin E.L."/>
            <person name="Jedrychowski M.P."/>
            <person name="Elias J.E."/>
            <person name="Goswami T."/>
            <person name="Rad R."/>
            <person name="Beausoleil S.A."/>
            <person name="Villen J."/>
            <person name="Haas W."/>
            <person name="Sowa M.E."/>
            <person name="Gygi S.P."/>
        </authorList>
    </citation>
    <scope>IDENTIFICATION BY MASS SPECTROMETRY [LARGE SCALE ANALYSIS]</scope>
    <source>
        <tissue>Brain</tissue>
        <tissue>Heart</tissue>
        <tissue>Kidney</tissue>
        <tissue>Liver</tissue>
        <tissue>Lung</tissue>
        <tissue>Pancreas</tissue>
        <tissue>Spleen</tissue>
        <tissue>Testis</tissue>
    </source>
</reference>
<name>DJB11_MOUSE</name>
<comment type="function">
    <text evidence="2">As a co-chaperone for HSPA5 it is required for proper folding, trafficking or degradation of proteins. Binds directly to both unfolded proteins that are substrates for ERAD and nascent unfolded peptide chains, but dissociates from the HSPA5-unfolded protein complex before folding is completed. May help recruiting HSPA5 and other chaperones to the substrate. Stimulates HSPA5 ATPase activity. It is necessary for maturation and correct trafficking of PKD1.</text>
</comment>
<comment type="subunit">
    <text evidence="1">Part of a large chaperone multiprotein complex comprising DNAJB11, HSP90B1, HSPA5, HYOU, PDIA2, PDIA4, PDIA6, PPIB, SDF2L1, UGGT1 and very small amounts of ERP29, but not, or at very low levels, CALR nor CANX. Binds to denatured substrates in an ATP-independent manner. Interacts via the J domain with HSPA5 in an ATP-dependent manner (By similarity).</text>
</comment>
<comment type="interaction">
    <interactant intactId="EBI-8328260">
        <id>Q99KV1</id>
    </interactant>
    <interactant intactId="EBI-772325">
        <id>P20029</id>
        <label>Hspa5</label>
    </interactant>
    <organismsDiffer>false</organismsDiffer>
    <experiments>4</experiments>
</comment>
<comment type="subcellular location">
    <subcellularLocation>
        <location evidence="4">Endoplasmic reticulum lumen</location>
    </subcellularLocation>
</comment>
<comment type="PTM">
    <text evidence="1">Contains high-mannose Endo H-sensitive carbohydrates.</text>
</comment>
<comment type="PTM">
    <text evidence="1">Cys-169, Cys-171, Cys-193 and Cys-196 form intramolecular disulfide bonds. The preferential partner for each Cys is not known (By similarity).</text>
</comment>
<comment type="caution">
    <text evidence="5">PubMed:11584023 reported a cytosolic, as well as nuclear subcellular location. This result was obtained using an N-terminally GFP-tagged construct which most probably affected signal peptide-driven targeting to the ER. As a consequence, the in vivo revelance of the observed interaction with APOBEC1, a nuclear protein, is dubious.</text>
</comment>
<gene>
    <name type="primary">Dnajb11</name>
</gene>
<keyword id="KW-0143">Chaperone</keyword>
<keyword id="KW-1015">Disulfide bond</keyword>
<keyword id="KW-0256">Endoplasmic reticulum</keyword>
<keyword id="KW-0325">Glycoprotein</keyword>
<keyword id="KW-0597">Phosphoprotein</keyword>
<keyword id="KW-1185">Reference proteome</keyword>
<keyword id="KW-0732">Signal</keyword>
<evidence type="ECO:0000250" key="1"/>
<evidence type="ECO:0000250" key="2">
    <source>
        <dbReference type="UniProtKB" id="Q9UBS4"/>
    </source>
</evidence>
<evidence type="ECO:0000255" key="3">
    <source>
        <dbReference type="PROSITE-ProRule" id="PRU00286"/>
    </source>
</evidence>
<evidence type="ECO:0000269" key="4">
    <source>
    </source>
</evidence>
<evidence type="ECO:0000305" key="5"/>
<feature type="signal peptide" evidence="1">
    <location>
        <begin position="1"/>
        <end position="22"/>
    </location>
</feature>
<feature type="chain" id="PRO_0000007261" description="DnaJ homolog subfamily B member 11">
    <location>
        <begin position="23"/>
        <end position="358"/>
    </location>
</feature>
<feature type="domain" description="J" evidence="3">
    <location>
        <begin position="25"/>
        <end position="90"/>
    </location>
</feature>
<feature type="modified residue" description="Phosphothreonine" evidence="2">
    <location>
        <position position="188"/>
    </location>
</feature>
<feature type="glycosylation site" description="N-linked (GlcNAc...) asparagine" evidence="5">
    <location>
        <position position="261"/>
    </location>
</feature>
<feature type="sequence conflict" description="In Ref. 2; BAC35956." evidence="5" ref="2">
    <original>F</original>
    <variation>L</variation>
    <location>
        <position position="9"/>
    </location>
</feature>
<feature type="sequence conflict" description="In Ref. 4; AAH18282." evidence="5" ref="4">
    <original>T</original>
    <variation>A</variation>
    <location>
        <position position="88"/>
    </location>
</feature>
<feature type="sequence conflict" description="In Ref. 1; AAL17676." evidence="5" ref="1">
    <original>R</original>
    <variation>L</variation>
    <location>
        <position position="217"/>
    </location>
</feature>
<feature type="sequence conflict" description="In Ref. 1; AAL17676." evidence="5" ref="1">
    <original>R</original>
    <variation>P</variation>
    <location>
        <position position="240"/>
    </location>
</feature>
<feature type="sequence conflict" description="In Ref. 2; BAC35956." evidence="5" ref="2">
    <original>G</original>
    <variation>E</variation>
    <location>
        <position position="255"/>
    </location>
</feature>
<proteinExistence type="evidence at protein level"/>
<dbReference type="EMBL" id="AY054981">
    <property type="protein sequence ID" value="AAL17676.1"/>
    <property type="molecule type" value="mRNA"/>
</dbReference>
<dbReference type="EMBL" id="AK050500">
    <property type="protein sequence ID" value="BAC34293.1"/>
    <property type="molecule type" value="mRNA"/>
</dbReference>
<dbReference type="EMBL" id="AK075785">
    <property type="protein sequence ID" value="BAC35956.1"/>
    <property type="molecule type" value="mRNA"/>
</dbReference>
<dbReference type="EMBL" id="AK075953">
    <property type="protein sequence ID" value="BAC36079.1"/>
    <property type="molecule type" value="mRNA"/>
</dbReference>
<dbReference type="EMBL" id="AK148511">
    <property type="protein sequence ID" value="BAE28593.1"/>
    <property type="molecule type" value="mRNA"/>
</dbReference>
<dbReference type="EMBL" id="AK166730">
    <property type="protein sequence ID" value="BAE38977.1"/>
    <property type="molecule type" value="mRNA"/>
</dbReference>
<dbReference type="EMBL" id="CT027991">
    <property type="status" value="NOT_ANNOTATED_CDS"/>
    <property type="molecule type" value="Genomic_DNA"/>
</dbReference>
<dbReference type="EMBL" id="BC003999">
    <property type="protein sequence ID" value="AAH03999.1"/>
    <property type="molecule type" value="mRNA"/>
</dbReference>
<dbReference type="EMBL" id="BC018282">
    <property type="protein sequence ID" value="AAH18282.1"/>
    <property type="molecule type" value="mRNA"/>
</dbReference>
<dbReference type="EMBL" id="BC040747">
    <property type="protein sequence ID" value="AAH40747.1"/>
    <property type="molecule type" value="mRNA"/>
</dbReference>
<dbReference type="CCDS" id="CCDS28070.1"/>
<dbReference type="RefSeq" id="NP_001177733.1">
    <property type="nucleotide sequence ID" value="NM_001190804.1"/>
</dbReference>
<dbReference type="RefSeq" id="NP_001177734.1">
    <property type="nucleotide sequence ID" value="NM_001190805.1"/>
</dbReference>
<dbReference type="RefSeq" id="NP_080676.3">
    <property type="nucleotide sequence ID" value="NM_026400.5"/>
</dbReference>
<dbReference type="SMR" id="Q99KV1"/>
<dbReference type="BioGRID" id="212468">
    <property type="interactions" value="28"/>
</dbReference>
<dbReference type="CORUM" id="Q99KV1"/>
<dbReference type="DIP" id="DIP-60531N"/>
<dbReference type="FunCoup" id="Q99KV1">
    <property type="interactions" value="3345"/>
</dbReference>
<dbReference type="IntAct" id="Q99KV1">
    <property type="interactions" value="8"/>
</dbReference>
<dbReference type="MINT" id="Q99KV1"/>
<dbReference type="STRING" id="10090.ENSMUSP00000126828"/>
<dbReference type="GlyCosmos" id="Q99KV1">
    <property type="glycosylation" value="1 site, No reported glycans"/>
</dbReference>
<dbReference type="GlyGen" id="Q99KV1">
    <property type="glycosylation" value="1 site"/>
</dbReference>
<dbReference type="iPTMnet" id="Q99KV1"/>
<dbReference type="PhosphoSitePlus" id="Q99KV1"/>
<dbReference type="SwissPalm" id="Q99KV1"/>
<dbReference type="REPRODUCTION-2DPAGE" id="Q99KV1"/>
<dbReference type="jPOST" id="Q99KV1"/>
<dbReference type="PaxDb" id="10090-ENSMUSP00000126828"/>
<dbReference type="PeptideAtlas" id="Q99KV1"/>
<dbReference type="ProteomicsDB" id="277457"/>
<dbReference type="Pumba" id="Q99KV1"/>
<dbReference type="DNASU" id="67838"/>
<dbReference type="Ensembl" id="ENSMUST00000004574.14">
    <property type="protein sequence ID" value="ENSMUSP00000004574.8"/>
    <property type="gene ID" value="ENSMUSG00000004460.18"/>
</dbReference>
<dbReference type="Ensembl" id="ENSMUST00000166487.10">
    <property type="protein sequence ID" value="ENSMUSP00000126828.3"/>
    <property type="gene ID" value="ENSMUSG00000004460.18"/>
</dbReference>
<dbReference type="Ensembl" id="ENSMUST00000178320.2">
    <property type="protein sequence ID" value="ENSMUSP00000137542.2"/>
    <property type="gene ID" value="ENSMUSG00000004460.18"/>
</dbReference>
<dbReference type="GeneID" id="67838"/>
<dbReference type="KEGG" id="mmu:67838"/>
<dbReference type="UCSC" id="uc007yso.2">
    <property type="organism name" value="mouse"/>
</dbReference>
<dbReference type="AGR" id="MGI:1915088"/>
<dbReference type="CTD" id="51726"/>
<dbReference type="MGI" id="MGI:1915088">
    <property type="gene designation" value="Dnajb11"/>
</dbReference>
<dbReference type="VEuPathDB" id="HostDB:ENSMUSG00000004460"/>
<dbReference type="eggNOG" id="KOG0713">
    <property type="taxonomic scope" value="Eukaryota"/>
</dbReference>
<dbReference type="GeneTree" id="ENSGT00940000155792"/>
<dbReference type="HOGENOM" id="CLU_017633_0_0_1"/>
<dbReference type="InParanoid" id="Q99KV1"/>
<dbReference type="OMA" id="FAGRDFY"/>
<dbReference type="OrthoDB" id="550424at2759"/>
<dbReference type="PhylomeDB" id="Q99KV1"/>
<dbReference type="TreeFam" id="TF105144"/>
<dbReference type="BioGRID-ORCS" id="67838">
    <property type="hits" value="2 hits in 77 CRISPR screens"/>
</dbReference>
<dbReference type="ChiTaRS" id="Dnajb11">
    <property type="organism name" value="mouse"/>
</dbReference>
<dbReference type="PRO" id="PR:Q99KV1"/>
<dbReference type="Proteomes" id="UP000000589">
    <property type="component" value="Chromosome 16"/>
</dbReference>
<dbReference type="RNAct" id="Q99KV1">
    <property type="molecule type" value="protein"/>
</dbReference>
<dbReference type="Bgee" id="ENSMUSG00000004460">
    <property type="expression patterns" value="Expressed in ileal epithelium and 264 other cell types or tissues"/>
</dbReference>
<dbReference type="ExpressionAtlas" id="Q99KV1">
    <property type="expression patterns" value="baseline and differential"/>
</dbReference>
<dbReference type="GO" id="GO:0005737">
    <property type="term" value="C:cytoplasm"/>
    <property type="evidence" value="ECO:0000314"/>
    <property type="project" value="MGI"/>
</dbReference>
<dbReference type="GO" id="GO:0034663">
    <property type="term" value="C:endoplasmic reticulum chaperone complex"/>
    <property type="evidence" value="ECO:0007669"/>
    <property type="project" value="Ensembl"/>
</dbReference>
<dbReference type="GO" id="GO:0005788">
    <property type="term" value="C:endoplasmic reticulum lumen"/>
    <property type="evidence" value="ECO:0007669"/>
    <property type="project" value="UniProtKB-SubCell"/>
</dbReference>
<dbReference type="GO" id="GO:0005615">
    <property type="term" value="C:extracellular space"/>
    <property type="evidence" value="ECO:0000314"/>
    <property type="project" value="MGI"/>
</dbReference>
<dbReference type="GO" id="GO:0005634">
    <property type="term" value="C:nucleus"/>
    <property type="evidence" value="ECO:0000314"/>
    <property type="project" value="MGI"/>
</dbReference>
<dbReference type="GO" id="GO:0101031">
    <property type="term" value="C:protein folding chaperone complex"/>
    <property type="evidence" value="ECO:0007669"/>
    <property type="project" value="Ensembl"/>
</dbReference>
<dbReference type="GO" id="GO:0051787">
    <property type="term" value="F:misfolded protein binding"/>
    <property type="evidence" value="ECO:0007669"/>
    <property type="project" value="Ensembl"/>
</dbReference>
<dbReference type="GO" id="GO:0005102">
    <property type="term" value="F:signaling receptor binding"/>
    <property type="evidence" value="ECO:0000353"/>
    <property type="project" value="MGI"/>
</dbReference>
<dbReference type="GO" id="GO:0051082">
    <property type="term" value="F:unfolded protein binding"/>
    <property type="evidence" value="ECO:0000314"/>
    <property type="project" value="MGI"/>
</dbReference>
<dbReference type="GO" id="GO:0016556">
    <property type="term" value="P:mRNA modification"/>
    <property type="evidence" value="ECO:0000314"/>
    <property type="project" value="MGI"/>
</dbReference>
<dbReference type="GO" id="GO:0050768">
    <property type="term" value="P:negative regulation of neurogenesis"/>
    <property type="evidence" value="ECO:0000315"/>
    <property type="project" value="MGI"/>
</dbReference>
<dbReference type="GO" id="GO:0006457">
    <property type="term" value="P:protein folding"/>
    <property type="evidence" value="ECO:0007669"/>
    <property type="project" value="InterPro"/>
</dbReference>
<dbReference type="GO" id="GO:0051604">
    <property type="term" value="P:protein maturation"/>
    <property type="evidence" value="ECO:0000250"/>
    <property type="project" value="UniProtKB"/>
</dbReference>
<dbReference type="CDD" id="cd06257">
    <property type="entry name" value="DnaJ"/>
    <property type="match status" value="1"/>
</dbReference>
<dbReference type="CDD" id="cd10747">
    <property type="entry name" value="DnaJ_C"/>
    <property type="match status" value="1"/>
</dbReference>
<dbReference type="FunFam" id="1.10.287.110:FF:000040">
    <property type="entry name" value="dnaJ homolog subfamily B member 11"/>
    <property type="match status" value="1"/>
</dbReference>
<dbReference type="FunFam" id="2.60.260.20:FF:000013">
    <property type="entry name" value="DnaJ subfamily B member 11"/>
    <property type="match status" value="1"/>
</dbReference>
<dbReference type="Gene3D" id="1.10.287.110">
    <property type="entry name" value="DnaJ domain"/>
    <property type="match status" value="1"/>
</dbReference>
<dbReference type="Gene3D" id="2.60.260.20">
    <property type="entry name" value="Urease metallochaperone UreE, N-terminal domain"/>
    <property type="match status" value="2"/>
</dbReference>
<dbReference type="InterPro" id="IPR051736">
    <property type="entry name" value="DnaJ-B11-like"/>
</dbReference>
<dbReference type="InterPro" id="IPR002939">
    <property type="entry name" value="DnaJ_C"/>
</dbReference>
<dbReference type="InterPro" id="IPR001623">
    <property type="entry name" value="DnaJ_domain"/>
</dbReference>
<dbReference type="InterPro" id="IPR018253">
    <property type="entry name" value="DnaJ_domain_CS"/>
</dbReference>
<dbReference type="InterPro" id="IPR008971">
    <property type="entry name" value="HSP40/DnaJ_pept-bd"/>
</dbReference>
<dbReference type="InterPro" id="IPR036869">
    <property type="entry name" value="J_dom_sf"/>
</dbReference>
<dbReference type="PANTHER" id="PTHR44298">
    <property type="entry name" value="DNAJ HOMOLOG SUBFAMILY B MEMBER 11"/>
    <property type="match status" value="1"/>
</dbReference>
<dbReference type="PANTHER" id="PTHR44298:SF1">
    <property type="entry name" value="DNAJ HOMOLOG SUBFAMILY B MEMBER 11"/>
    <property type="match status" value="1"/>
</dbReference>
<dbReference type="Pfam" id="PF00226">
    <property type="entry name" value="DnaJ"/>
    <property type="match status" value="1"/>
</dbReference>
<dbReference type="Pfam" id="PF01556">
    <property type="entry name" value="DnaJ_C"/>
    <property type="match status" value="1"/>
</dbReference>
<dbReference type="PRINTS" id="PR00625">
    <property type="entry name" value="JDOMAIN"/>
</dbReference>
<dbReference type="SMART" id="SM00271">
    <property type="entry name" value="DnaJ"/>
    <property type="match status" value="1"/>
</dbReference>
<dbReference type="SUPFAM" id="SSF46565">
    <property type="entry name" value="Chaperone J-domain"/>
    <property type="match status" value="1"/>
</dbReference>
<dbReference type="SUPFAM" id="SSF49493">
    <property type="entry name" value="HSP40/DnaJ peptide-binding domain"/>
    <property type="match status" value="2"/>
</dbReference>
<dbReference type="PROSITE" id="PS00636">
    <property type="entry name" value="DNAJ_1"/>
    <property type="match status" value="1"/>
</dbReference>
<dbReference type="PROSITE" id="PS50076">
    <property type="entry name" value="DNAJ_2"/>
    <property type="match status" value="1"/>
</dbReference>
<protein>
    <recommendedName>
        <fullName>DnaJ homolog subfamily B member 11</fullName>
    </recommendedName>
    <alternativeName>
        <fullName>APOBEC1-binding protein 2</fullName>
        <shortName>ABBP-2</shortName>
    </alternativeName>
    <alternativeName>
        <fullName>ER-associated DNAJ</fullName>
    </alternativeName>
    <alternativeName>
        <fullName>ER-associated Hsp40 co-chaperone</fullName>
    </alternativeName>
    <alternativeName>
        <fullName>Endoplasmic reticulum DNA J domain-containing protein 3</fullName>
        <shortName>ER-resident protein ERdj3</shortName>
        <shortName>ERdj3</shortName>
        <shortName>ERj3p</shortName>
    </alternativeName>
</protein>
<organism>
    <name type="scientific">Mus musculus</name>
    <name type="common">Mouse</name>
    <dbReference type="NCBI Taxonomy" id="10090"/>
    <lineage>
        <taxon>Eukaryota</taxon>
        <taxon>Metazoa</taxon>
        <taxon>Chordata</taxon>
        <taxon>Craniata</taxon>
        <taxon>Vertebrata</taxon>
        <taxon>Euteleostomi</taxon>
        <taxon>Mammalia</taxon>
        <taxon>Eutheria</taxon>
        <taxon>Euarchontoglires</taxon>
        <taxon>Glires</taxon>
        <taxon>Rodentia</taxon>
        <taxon>Myomorpha</taxon>
        <taxon>Muroidea</taxon>
        <taxon>Muridae</taxon>
        <taxon>Murinae</taxon>
        <taxon>Mus</taxon>
        <taxon>Mus</taxon>
    </lineage>
</organism>